<accession>P0A0Y6</accession>
<accession>Q9JQM1</accession>
<gene>
    <name evidence="1" type="primary">gmhA</name>
    <name type="synonym">lpcA</name>
    <name type="ordered locus">NMB2090</name>
</gene>
<evidence type="ECO:0000255" key="1">
    <source>
        <dbReference type="HAMAP-Rule" id="MF_00067"/>
    </source>
</evidence>
<name>GMHA_NEIMB</name>
<feature type="chain" id="PRO_0000136539" description="Phosphoheptose isomerase">
    <location>
        <begin position="1"/>
        <end position="197"/>
    </location>
</feature>
<feature type="domain" description="SIS" evidence="1">
    <location>
        <begin position="37"/>
        <end position="197"/>
    </location>
</feature>
<feature type="binding site" evidence="1">
    <location>
        <begin position="52"/>
        <end position="54"/>
    </location>
    <ligand>
        <name>substrate</name>
    </ligand>
</feature>
<feature type="binding site" evidence="1">
    <location>
        <position position="61"/>
    </location>
    <ligand>
        <name>Zn(2+)</name>
        <dbReference type="ChEBI" id="CHEBI:29105"/>
    </ligand>
</feature>
<feature type="binding site" evidence="1">
    <location>
        <position position="65"/>
    </location>
    <ligand>
        <name>substrate</name>
    </ligand>
</feature>
<feature type="binding site" evidence="1">
    <location>
        <position position="65"/>
    </location>
    <ligand>
        <name>Zn(2+)</name>
        <dbReference type="ChEBI" id="CHEBI:29105"/>
    </ligand>
</feature>
<feature type="binding site" evidence="1">
    <location>
        <begin position="94"/>
        <end position="95"/>
    </location>
    <ligand>
        <name>substrate</name>
    </ligand>
</feature>
<feature type="binding site" evidence="1">
    <location>
        <begin position="120"/>
        <end position="122"/>
    </location>
    <ligand>
        <name>substrate</name>
    </ligand>
</feature>
<feature type="binding site" evidence="1">
    <location>
        <position position="125"/>
    </location>
    <ligand>
        <name>substrate</name>
    </ligand>
</feature>
<feature type="binding site" evidence="1">
    <location>
        <position position="175"/>
    </location>
    <ligand>
        <name>substrate</name>
    </ligand>
</feature>
<feature type="binding site" evidence="1">
    <location>
        <position position="175"/>
    </location>
    <ligand>
        <name>Zn(2+)</name>
        <dbReference type="ChEBI" id="CHEBI:29105"/>
    </ligand>
</feature>
<feature type="binding site" evidence="1">
    <location>
        <position position="183"/>
    </location>
    <ligand>
        <name>Zn(2+)</name>
        <dbReference type="ChEBI" id="CHEBI:29105"/>
    </ligand>
</feature>
<reference key="1">
    <citation type="journal article" date="2000" name="Science">
        <title>Complete genome sequence of Neisseria meningitidis serogroup B strain MC58.</title>
        <authorList>
            <person name="Tettelin H."/>
            <person name="Saunders N.J."/>
            <person name="Heidelberg J.F."/>
            <person name="Jeffries A.C."/>
            <person name="Nelson K.E."/>
            <person name="Eisen J.A."/>
            <person name="Ketchum K.A."/>
            <person name="Hood D.W."/>
            <person name="Peden J.F."/>
            <person name="Dodson R.J."/>
            <person name="Nelson W.C."/>
            <person name="Gwinn M.L."/>
            <person name="DeBoy R.T."/>
            <person name="Peterson J.D."/>
            <person name="Hickey E.K."/>
            <person name="Haft D.H."/>
            <person name="Salzberg S.L."/>
            <person name="White O."/>
            <person name="Fleischmann R.D."/>
            <person name="Dougherty B.A."/>
            <person name="Mason T.M."/>
            <person name="Ciecko A."/>
            <person name="Parksey D.S."/>
            <person name="Blair E."/>
            <person name="Cittone H."/>
            <person name="Clark E.B."/>
            <person name="Cotton M.D."/>
            <person name="Utterback T.R."/>
            <person name="Khouri H.M."/>
            <person name="Qin H."/>
            <person name="Vamathevan J.J."/>
            <person name="Gill J."/>
            <person name="Scarlato V."/>
            <person name="Masignani V."/>
            <person name="Pizza M."/>
            <person name="Grandi G."/>
            <person name="Sun L."/>
            <person name="Smith H.O."/>
            <person name="Fraser C.M."/>
            <person name="Moxon E.R."/>
            <person name="Rappuoli R."/>
            <person name="Venter J.C."/>
        </authorList>
    </citation>
    <scope>NUCLEOTIDE SEQUENCE [LARGE SCALE GENOMIC DNA]</scope>
    <source>
        <strain>ATCC BAA-335 / MC58</strain>
    </source>
</reference>
<reference key="2">
    <citation type="journal article" date="2002" name="Microbiology">
        <title>Novel pathways for biosynthesis of nucleotide-activated glycero-manno-heptose precursors of bacterial glycoproteins and cell surface polysaccharides.</title>
        <authorList>
            <person name="Valvano M.A."/>
            <person name="Messner P."/>
            <person name="Kosma P."/>
        </authorList>
    </citation>
    <scope>BIOSYNTHESIS OF NUCLEOTIDE-ACTIVATED GLYCERO-MANNO-HEPTOSE</scope>
</reference>
<keyword id="KW-0119">Carbohydrate metabolism</keyword>
<keyword id="KW-0963">Cytoplasm</keyword>
<keyword id="KW-0413">Isomerase</keyword>
<keyword id="KW-0479">Metal-binding</keyword>
<keyword id="KW-1185">Reference proteome</keyword>
<keyword id="KW-0862">Zinc</keyword>
<sequence length="197" mass="20989">MTTLQERVAAHFAESIRAKQEAGKVLVEPTVQAAELMLQCLMNDGKILACGNGGSAADAQHFAAEMTGRFEKERMELAAVALTTDTSALTAIGNDYGFDHVFSKQVRALGRAGDVLVGISTSGNSANVIEAVKAAHERDMHVIALTGRDGGKIAAILKDTDVLLNVPHPRTARIQENHILLIHAMCDCIDSVLLEGM</sequence>
<proteinExistence type="inferred from homology"/>
<organism>
    <name type="scientific">Neisseria meningitidis serogroup B (strain ATCC BAA-335 / MC58)</name>
    <dbReference type="NCBI Taxonomy" id="122586"/>
    <lineage>
        <taxon>Bacteria</taxon>
        <taxon>Pseudomonadati</taxon>
        <taxon>Pseudomonadota</taxon>
        <taxon>Betaproteobacteria</taxon>
        <taxon>Neisseriales</taxon>
        <taxon>Neisseriaceae</taxon>
        <taxon>Neisseria</taxon>
    </lineage>
</organism>
<comment type="function">
    <text evidence="1">Catalyzes the isomerization of sedoheptulose 7-phosphate in D-glycero-D-manno-heptose 7-phosphate.</text>
</comment>
<comment type="catalytic activity">
    <reaction evidence="1">
        <text>2 D-sedoheptulose 7-phosphate = D-glycero-alpha-D-manno-heptose 7-phosphate + D-glycero-beta-D-manno-heptose 7-phosphate</text>
        <dbReference type="Rhea" id="RHEA:27489"/>
        <dbReference type="ChEBI" id="CHEBI:57483"/>
        <dbReference type="ChEBI" id="CHEBI:60203"/>
        <dbReference type="ChEBI" id="CHEBI:60204"/>
        <dbReference type="EC" id="5.3.1.28"/>
    </reaction>
</comment>
<comment type="cofactor">
    <cofactor evidence="1">
        <name>Zn(2+)</name>
        <dbReference type="ChEBI" id="CHEBI:29105"/>
    </cofactor>
    <text evidence="1">Binds 1 zinc ion per subunit.</text>
</comment>
<comment type="pathway">
    <text evidence="1">Carbohydrate biosynthesis; D-glycero-D-manno-heptose 7-phosphate biosynthesis; D-glycero-alpha-D-manno-heptose 7-phosphate and D-glycero-beta-D-manno-heptose 7-phosphate from sedoheptulose 7-phosphate: step 1/1.</text>
</comment>
<comment type="pathway">
    <text>Bacterial outer membrane biogenesis; LOS core biosynthesis.</text>
</comment>
<comment type="subunit">
    <text evidence="1">Homotetramer.</text>
</comment>
<comment type="subcellular location">
    <subcellularLocation>
        <location evidence="1">Cytoplasm</location>
    </subcellularLocation>
</comment>
<comment type="miscellaneous">
    <text evidence="1">The reaction produces a racemic mixture of D-glycero-alpha-D-manno-heptose 7-phosphate and D-glycero-beta-D-manno-heptose 7-phosphate.</text>
</comment>
<comment type="similarity">
    <text evidence="1">Belongs to the SIS family. GmhA subfamily.</text>
</comment>
<protein>
    <recommendedName>
        <fullName evidence="1">Phosphoheptose isomerase</fullName>
        <ecNumber evidence="1">5.3.1.28</ecNumber>
    </recommendedName>
    <alternativeName>
        <fullName evidence="1">Sedoheptulose 7-phosphate isomerase</fullName>
    </alternativeName>
</protein>
<dbReference type="EC" id="5.3.1.28" evidence="1"/>
<dbReference type="EMBL" id="AE002098">
    <property type="protein sequence ID" value="AAF42407.1"/>
    <property type="molecule type" value="Genomic_DNA"/>
</dbReference>
<dbReference type="PIR" id="H81007">
    <property type="entry name" value="H81007"/>
</dbReference>
<dbReference type="RefSeq" id="NP_275078.1">
    <property type="nucleotide sequence ID" value="NC_003112.2"/>
</dbReference>
<dbReference type="RefSeq" id="WP_002219976.1">
    <property type="nucleotide sequence ID" value="NC_003112.2"/>
</dbReference>
<dbReference type="SMR" id="P0A0Y6"/>
<dbReference type="FunCoup" id="P0A0Y6">
    <property type="interactions" value="64"/>
</dbReference>
<dbReference type="STRING" id="122586.NMB2090"/>
<dbReference type="PaxDb" id="122586-NMB2090"/>
<dbReference type="KEGG" id="nme:NMB2090"/>
<dbReference type="PATRIC" id="fig|122586.8.peg.2672"/>
<dbReference type="HOGENOM" id="CLU_080999_4_0_4"/>
<dbReference type="InParanoid" id="P0A0Y6"/>
<dbReference type="OrthoDB" id="9810929at2"/>
<dbReference type="BRENDA" id="5.3.1.28">
    <property type="organism ID" value="3593"/>
</dbReference>
<dbReference type="UniPathway" id="UPA00041">
    <property type="reaction ID" value="UER00436"/>
</dbReference>
<dbReference type="UniPathway" id="UPA00976"/>
<dbReference type="Proteomes" id="UP000000425">
    <property type="component" value="Chromosome"/>
</dbReference>
<dbReference type="GO" id="GO:0005737">
    <property type="term" value="C:cytoplasm"/>
    <property type="evidence" value="ECO:0007669"/>
    <property type="project" value="UniProtKB-SubCell"/>
</dbReference>
<dbReference type="GO" id="GO:1990102">
    <property type="term" value="C:DnaA-DiaA complex"/>
    <property type="evidence" value="ECO:0000318"/>
    <property type="project" value="GO_Central"/>
</dbReference>
<dbReference type="GO" id="GO:0097367">
    <property type="term" value="F:carbohydrate derivative binding"/>
    <property type="evidence" value="ECO:0007669"/>
    <property type="project" value="InterPro"/>
</dbReference>
<dbReference type="GO" id="GO:0008968">
    <property type="term" value="F:D-sedoheptulose 7-phosphate isomerase activity"/>
    <property type="evidence" value="ECO:0007669"/>
    <property type="project" value="UniProtKB-UniRule"/>
</dbReference>
<dbReference type="GO" id="GO:0008270">
    <property type="term" value="F:zinc ion binding"/>
    <property type="evidence" value="ECO:0007669"/>
    <property type="project" value="UniProtKB-UniRule"/>
</dbReference>
<dbReference type="GO" id="GO:0005975">
    <property type="term" value="P:carbohydrate metabolic process"/>
    <property type="evidence" value="ECO:0007669"/>
    <property type="project" value="UniProtKB-UniRule"/>
</dbReference>
<dbReference type="GO" id="GO:2001061">
    <property type="term" value="P:D-glycero-D-manno-heptose 7-phosphate biosynthetic process"/>
    <property type="evidence" value="ECO:0007669"/>
    <property type="project" value="UniProtKB-UniPathway"/>
</dbReference>
<dbReference type="GO" id="GO:0032298">
    <property type="term" value="P:positive regulation of DNA-templated DNA replication initiation"/>
    <property type="evidence" value="ECO:0000318"/>
    <property type="project" value="GO_Central"/>
</dbReference>
<dbReference type="CDD" id="cd05006">
    <property type="entry name" value="SIS_GmhA"/>
    <property type="match status" value="1"/>
</dbReference>
<dbReference type="Gene3D" id="3.40.50.10490">
    <property type="entry name" value="Glucose-6-phosphate isomerase like protein, domain 1"/>
    <property type="match status" value="1"/>
</dbReference>
<dbReference type="HAMAP" id="MF_00067">
    <property type="entry name" value="GmhA"/>
    <property type="match status" value="1"/>
</dbReference>
<dbReference type="InterPro" id="IPR035461">
    <property type="entry name" value="GmhA/DiaA"/>
</dbReference>
<dbReference type="InterPro" id="IPR004515">
    <property type="entry name" value="Phosphoheptose_Isoase"/>
</dbReference>
<dbReference type="InterPro" id="IPR001347">
    <property type="entry name" value="SIS_dom"/>
</dbReference>
<dbReference type="InterPro" id="IPR046348">
    <property type="entry name" value="SIS_dom_sf"/>
</dbReference>
<dbReference type="InterPro" id="IPR050099">
    <property type="entry name" value="SIS_GmhA/DiaA_subfam"/>
</dbReference>
<dbReference type="NCBIfam" id="TIGR00441">
    <property type="entry name" value="gmhA"/>
    <property type="match status" value="1"/>
</dbReference>
<dbReference type="NCBIfam" id="NF010546">
    <property type="entry name" value="PRK13936.1"/>
    <property type="match status" value="1"/>
</dbReference>
<dbReference type="PANTHER" id="PTHR30390:SF6">
    <property type="entry name" value="DNAA INITIATOR-ASSOCIATING PROTEIN DIAA"/>
    <property type="match status" value="1"/>
</dbReference>
<dbReference type="PANTHER" id="PTHR30390">
    <property type="entry name" value="SEDOHEPTULOSE 7-PHOSPHATE ISOMERASE / DNAA INITIATOR-ASSOCIATING FACTOR FOR REPLICATION INITIATION"/>
    <property type="match status" value="1"/>
</dbReference>
<dbReference type="Pfam" id="PF13580">
    <property type="entry name" value="SIS_2"/>
    <property type="match status" value="1"/>
</dbReference>
<dbReference type="SUPFAM" id="SSF53697">
    <property type="entry name" value="SIS domain"/>
    <property type="match status" value="1"/>
</dbReference>
<dbReference type="PROSITE" id="PS51464">
    <property type="entry name" value="SIS"/>
    <property type="match status" value="1"/>
</dbReference>